<proteinExistence type="inferred from homology"/>
<sequence>MPTPKKGARLGGSASHQKKILSNLAAQLFENGAIKTTDAKAKLLRPYAEKIITKAKNGTLADRRNVLKLIPNKDVVSHLFTELAPKFEGREGGYTRIIKLENRKGDNAPMSQISLVTEELASKEAERATRAAASKKAAEEKAAEAAEEKDEAAEEK</sequence>
<keyword id="KW-1185">Reference proteome</keyword>
<keyword id="KW-0687">Ribonucleoprotein</keyword>
<keyword id="KW-0689">Ribosomal protein</keyword>
<dbReference type="EMBL" id="AM942444">
    <property type="protein sequence ID" value="CAQ04322.1"/>
    <property type="molecule type" value="Genomic_DNA"/>
</dbReference>
<dbReference type="RefSeq" id="WP_012359615.1">
    <property type="nucleotide sequence ID" value="NC_010545.1"/>
</dbReference>
<dbReference type="SMR" id="B1VEY3"/>
<dbReference type="STRING" id="504474.cu0362"/>
<dbReference type="GeneID" id="60605165"/>
<dbReference type="KEGG" id="cur:cu0362"/>
<dbReference type="eggNOG" id="COG0203">
    <property type="taxonomic scope" value="Bacteria"/>
</dbReference>
<dbReference type="HOGENOM" id="CLU_074407_0_0_11"/>
<dbReference type="Proteomes" id="UP000001727">
    <property type="component" value="Chromosome"/>
</dbReference>
<dbReference type="GO" id="GO:0022625">
    <property type="term" value="C:cytosolic large ribosomal subunit"/>
    <property type="evidence" value="ECO:0007669"/>
    <property type="project" value="TreeGrafter"/>
</dbReference>
<dbReference type="GO" id="GO:0003735">
    <property type="term" value="F:structural constituent of ribosome"/>
    <property type="evidence" value="ECO:0007669"/>
    <property type="project" value="InterPro"/>
</dbReference>
<dbReference type="GO" id="GO:0006412">
    <property type="term" value="P:translation"/>
    <property type="evidence" value="ECO:0007669"/>
    <property type="project" value="UniProtKB-UniRule"/>
</dbReference>
<dbReference type="FunFam" id="3.90.1030.10:FF:000001">
    <property type="entry name" value="50S ribosomal protein L17"/>
    <property type="match status" value="1"/>
</dbReference>
<dbReference type="Gene3D" id="3.90.1030.10">
    <property type="entry name" value="Ribosomal protein L17"/>
    <property type="match status" value="1"/>
</dbReference>
<dbReference type="HAMAP" id="MF_01368">
    <property type="entry name" value="Ribosomal_bL17"/>
    <property type="match status" value="1"/>
</dbReference>
<dbReference type="InterPro" id="IPR000456">
    <property type="entry name" value="Ribosomal_bL17"/>
</dbReference>
<dbReference type="InterPro" id="IPR047859">
    <property type="entry name" value="Ribosomal_bL17_CS"/>
</dbReference>
<dbReference type="InterPro" id="IPR036373">
    <property type="entry name" value="Ribosomal_bL17_sf"/>
</dbReference>
<dbReference type="NCBIfam" id="TIGR00059">
    <property type="entry name" value="L17"/>
    <property type="match status" value="1"/>
</dbReference>
<dbReference type="PANTHER" id="PTHR14413:SF16">
    <property type="entry name" value="LARGE RIBOSOMAL SUBUNIT PROTEIN BL17M"/>
    <property type="match status" value="1"/>
</dbReference>
<dbReference type="PANTHER" id="PTHR14413">
    <property type="entry name" value="RIBOSOMAL PROTEIN L17"/>
    <property type="match status" value="1"/>
</dbReference>
<dbReference type="Pfam" id="PF01196">
    <property type="entry name" value="Ribosomal_L17"/>
    <property type="match status" value="1"/>
</dbReference>
<dbReference type="SUPFAM" id="SSF64263">
    <property type="entry name" value="Prokaryotic ribosomal protein L17"/>
    <property type="match status" value="1"/>
</dbReference>
<dbReference type="PROSITE" id="PS01167">
    <property type="entry name" value="RIBOSOMAL_L17"/>
    <property type="match status" value="1"/>
</dbReference>
<reference key="1">
    <citation type="journal article" date="2008" name="J. Biotechnol.">
        <title>The lifestyle of Corynebacterium urealyticum derived from its complete genome sequence established by pyrosequencing.</title>
        <authorList>
            <person name="Tauch A."/>
            <person name="Trost E."/>
            <person name="Tilker A."/>
            <person name="Ludewig U."/>
            <person name="Schneiker S."/>
            <person name="Goesmann A."/>
            <person name="Arnold W."/>
            <person name="Bekel T."/>
            <person name="Brinkrolf K."/>
            <person name="Brune I."/>
            <person name="Goetker S."/>
            <person name="Kalinowski J."/>
            <person name="Kamp P.-B."/>
            <person name="Lobo F.P."/>
            <person name="Viehoever P."/>
            <person name="Weisshaar B."/>
            <person name="Soriano F."/>
            <person name="Droege M."/>
            <person name="Puehler A."/>
        </authorList>
    </citation>
    <scope>NUCLEOTIDE SEQUENCE [LARGE SCALE GENOMIC DNA]</scope>
    <source>
        <strain>ATCC 43042 / DSM 7109</strain>
    </source>
</reference>
<evidence type="ECO:0000255" key="1">
    <source>
        <dbReference type="HAMAP-Rule" id="MF_01368"/>
    </source>
</evidence>
<evidence type="ECO:0000256" key="2">
    <source>
        <dbReference type="SAM" id="MobiDB-lite"/>
    </source>
</evidence>
<evidence type="ECO:0000305" key="3"/>
<protein>
    <recommendedName>
        <fullName evidence="1">Large ribosomal subunit protein bL17</fullName>
    </recommendedName>
    <alternativeName>
        <fullName evidence="3">50S ribosomal protein L17</fullName>
    </alternativeName>
</protein>
<feature type="chain" id="PRO_1000144405" description="Large ribosomal subunit protein bL17">
    <location>
        <begin position="1"/>
        <end position="156"/>
    </location>
</feature>
<feature type="region of interest" description="Disordered" evidence="2">
    <location>
        <begin position="127"/>
        <end position="156"/>
    </location>
</feature>
<feature type="compositionally biased region" description="Basic and acidic residues" evidence="2">
    <location>
        <begin position="136"/>
        <end position="146"/>
    </location>
</feature>
<feature type="compositionally biased region" description="Acidic residues" evidence="2">
    <location>
        <begin position="147"/>
        <end position="156"/>
    </location>
</feature>
<gene>
    <name evidence="1" type="primary">rplQ</name>
    <name type="ordered locus">cu0362</name>
</gene>
<accession>B1VEY3</accession>
<comment type="subunit">
    <text evidence="1">Part of the 50S ribosomal subunit. Contacts protein L32.</text>
</comment>
<comment type="similarity">
    <text evidence="1">Belongs to the bacterial ribosomal protein bL17 family.</text>
</comment>
<name>RL17_CORU7</name>
<organism>
    <name type="scientific">Corynebacterium urealyticum (strain ATCC 43042 / DSM 7109)</name>
    <dbReference type="NCBI Taxonomy" id="504474"/>
    <lineage>
        <taxon>Bacteria</taxon>
        <taxon>Bacillati</taxon>
        <taxon>Actinomycetota</taxon>
        <taxon>Actinomycetes</taxon>
        <taxon>Mycobacteriales</taxon>
        <taxon>Corynebacteriaceae</taxon>
        <taxon>Corynebacterium</taxon>
    </lineage>
</organism>